<keyword id="KW-0002">3D-structure</keyword>
<keyword id="KW-0025">Alternative splicing</keyword>
<keyword id="KW-0496">Mitochondrion</keyword>
<keyword id="KW-1267">Proteomics identification</keyword>
<keyword id="KW-1185">Reference proteome</keyword>
<keyword id="KW-0687">Ribonucleoprotein</keyword>
<keyword id="KW-0689">Ribosomal protein</keyword>
<reference key="1">
    <citation type="journal article" date="2004" name="Nat. Genet.">
        <title>Complete sequencing and characterization of 21,243 full-length human cDNAs.</title>
        <authorList>
            <person name="Ota T."/>
            <person name="Suzuki Y."/>
            <person name="Nishikawa T."/>
            <person name="Otsuki T."/>
            <person name="Sugiyama T."/>
            <person name="Irie R."/>
            <person name="Wakamatsu A."/>
            <person name="Hayashi K."/>
            <person name="Sato H."/>
            <person name="Nagai K."/>
            <person name="Kimura K."/>
            <person name="Makita H."/>
            <person name="Sekine M."/>
            <person name="Obayashi M."/>
            <person name="Nishi T."/>
            <person name="Shibahara T."/>
            <person name="Tanaka T."/>
            <person name="Ishii S."/>
            <person name="Yamamoto J."/>
            <person name="Saito K."/>
            <person name="Kawai Y."/>
            <person name="Isono Y."/>
            <person name="Nakamura Y."/>
            <person name="Nagahari K."/>
            <person name="Murakami K."/>
            <person name="Yasuda T."/>
            <person name="Iwayanagi T."/>
            <person name="Wagatsuma M."/>
            <person name="Shiratori A."/>
            <person name="Sudo H."/>
            <person name="Hosoiri T."/>
            <person name="Kaku Y."/>
            <person name="Kodaira H."/>
            <person name="Kondo H."/>
            <person name="Sugawara M."/>
            <person name="Takahashi M."/>
            <person name="Kanda K."/>
            <person name="Yokoi T."/>
            <person name="Furuya T."/>
            <person name="Kikkawa E."/>
            <person name="Omura Y."/>
            <person name="Abe K."/>
            <person name="Kamihara K."/>
            <person name="Katsuta N."/>
            <person name="Sato K."/>
            <person name="Tanikawa M."/>
            <person name="Yamazaki M."/>
            <person name="Ninomiya K."/>
            <person name="Ishibashi T."/>
            <person name="Yamashita H."/>
            <person name="Murakawa K."/>
            <person name="Fujimori K."/>
            <person name="Tanai H."/>
            <person name="Kimata M."/>
            <person name="Watanabe M."/>
            <person name="Hiraoka S."/>
            <person name="Chiba Y."/>
            <person name="Ishida S."/>
            <person name="Ono Y."/>
            <person name="Takiguchi S."/>
            <person name="Watanabe S."/>
            <person name="Yosida M."/>
            <person name="Hotuta T."/>
            <person name="Kusano J."/>
            <person name="Kanehori K."/>
            <person name="Takahashi-Fujii A."/>
            <person name="Hara H."/>
            <person name="Tanase T.-O."/>
            <person name="Nomura Y."/>
            <person name="Togiya S."/>
            <person name="Komai F."/>
            <person name="Hara R."/>
            <person name="Takeuchi K."/>
            <person name="Arita M."/>
            <person name="Imose N."/>
            <person name="Musashino K."/>
            <person name="Yuuki H."/>
            <person name="Oshima A."/>
            <person name="Sasaki N."/>
            <person name="Aotsuka S."/>
            <person name="Yoshikawa Y."/>
            <person name="Matsunawa H."/>
            <person name="Ichihara T."/>
            <person name="Shiohata N."/>
            <person name="Sano S."/>
            <person name="Moriya S."/>
            <person name="Momiyama H."/>
            <person name="Satoh N."/>
            <person name="Takami S."/>
            <person name="Terashima Y."/>
            <person name="Suzuki O."/>
            <person name="Nakagawa S."/>
            <person name="Senoh A."/>
            <person name="Mizoguchi H."/>
            <person name="Goto Y."/>
            <person name="Shimizu F."/>
            <person name="Wakebe H."/>
            <person name="Hishigaki H."/>
            <person name="Watanabe T."/>
            <person name="Sugiyama A."/>
            <person name="Takemoto M."/>
            <person name="Kawakami B."/>
            <person name="Yamazaki M."/>
            <person name="Watanabe K."/>
            <person name="Kumagai A."/>
            <person name="Itakura S."/>
            <person name="Fukuzumi Y."/>
            <person name="Fujimori Y."/>
            <person name="Komiyama M."/>
            <person name="Tashiro H."/>
            <person name="Tanigami A."/>
            <person name="Fujiwara T."/>
            <person name="Ono T."/>
            <person name="Yamada K."/>
            <person name="Fujii Y."/>
            <person name="Ozaki K."/>
            <person name="Hirao M."/>
            <person name="Ohmori Y."/>
            <person name="Kawabata A."/>
            <person name="Hikiji T."/>
            <person name="Kobatake N."/>
            <person name="Inagaki H."/>
            <person name="Ikema Y."/>
            <person name="Okamoto S."/>
            <person name="Okitani R."/>
            <person name="Kawakami T."/>
            <person name="Noguchi S."/>
            <person name="Itoh T."/>
            <person name="Shigeta K."/>
            <person name="Senba T."/>
            <person name="Matsumura K."/>
            <person name="Nakajima Y."/>
            <person name="Mizuno T."/>
            <person name="Morinaga M."/>
            <person name="Sasaki M."/>
            <person name="Togashi T."/>
            <person name="Oyama M."/>
            <person name="Hata H."/>
            <person name="Watanabe M."/>
            <person name="Komatsu T."/>
            <person name="Mizushima-Sugano J."/>
            <person name="Satoh T."/>
            <person name="Shirai Y."/>
            <person name="Takahashi Y."/>
            <person name="Nakagawa K."/>
            <person name="Okumura K."/>
            <person name="Nagase T."/>
            <person name="Nomura N."/>
            <person name="Kikuchi H."/>
            <person name="Masuho Y."/>
            <person name="Yamashita R."/>
            <person name="Nakai K."/>
            <person name="Yada T."/>
            <person name="Nakamura Y."/>
            <person name="Ohara O."/>
            <person name="Isogai T."/>
            <person name="Sugano S."/>
        </authorList>
    </citation>
    <scope>NUCLEOTIDE SEQUENCE [LARGE SCALE MRNA] (ISOFORMS 1 AND 2)</scope>
    <source>
        <tissue>Carcinoma</tissue>
        <tissue>Hepatoma</tissue>
        <tissue>Hippocampus</tissue>
    </source>
</reference>
<reference key="2">
    <citation type="journal article" date="2004" name="Nature">
        <title>DNA sequence and analysis of human chromosome 9.</title>
        <authorList>
            <person name="Humphray S.J."/>
            <person name="Oliver K."/>
            <person name="Hunt A.R."/>
            <person name="Plumb R.W."/>
            <person name="Loveland J.E."/>
            <person name="Howe K.L."/>
            <person name="Andrews T.D."/>
            <person name="Searle S."/>
            <person name="Hunt S.E."/>
            <person name="Scott C.E."/>
            <person name="Jones M.C."/>
            <person name="Ainscough R."/>
            <person name="Almeida J.P."/>
            <person name="Ambrose K.D."/>
            <person name="Ashwell R.I.S."/>
            <person name="Babbage A.K."/>
            <person name="Babbage S."/>
            <person name="Bagguley C.L."/>
            <person name="Bailey J."/>
            <person name="Banerjee R."/>
            <person name="Barker D.J."/>
            <person name="Barlow K.F."/>
            <person name="Bates K."/>
            <person name="Beasley H."/>
            <person name="Beasley O."/>
            <person name="Bird C.P."/>
            <person name="Bray-Allen S."/>
            <person name="Brown A.J."/>
            <person name="Brown J.Y."/>
            <person name="Burford D."/>
            <person name="Burrill W."/>
            <person name="Burton J."/>
            <person name="Carder C."/>
            <person name="Carter N.P."/>
            <person name="Chapman J.C."/>
            <person name="Chen Y."/>
            <person name="Clarke G."/>
            <person name="Clark S.Y."/>
            <person name="Clee C.M."/>
            <person name="Clegg S."/>
            <person name="Collier R.E."/>
            <person name="Corby N."/>
            <person name="Crosier M."/>
            <person name="Cummings A.T."/>
            <person name="Davies J."/>
            <person name="Dhami P."/>
            <person name="Dunn M."/>
            <person name="Dutta I."/>
            <person name="Dyer L.W."/>
            <person name="Earthrowl M.E."/>
            <person name="Faulkner L."/>
            <person name="Fleming C.J."/>
            <person name="Frankish A."/>
            <person name="Frankland J.A."/>
            <person name="French L."/>
            <person name="Fricker D.G."/>
            <person name="Garner P."/>
            <person name="Garnett J."/>
            <person name="Ghori J."/>
            <person name="Gilbert J.G.R."/>
            <person name="Glison C."/>
            <person name="Grafham D.V."/>
            <person name="Gribble S."/>
            <person name="Griffiths C."/>
            <person name="Griffiths-Jones S."/>
            <person name="Grocock R."/>
            <person name="Guy J."/>
            <person name="Hall R.E."/>
            <person name="Hammond S."/>
            <person name="Harley J.L."/>
            <person name="Harrison E.S.I."/>
            <person name="Hart E.A."/>
            <person name="Heath P.D."/>
            <person name="Henderson C.D."/>
            <person name="Hopkins B.L."/>
            <person name="Howard P.J."/>
            <person name="Howden P.J."/>
            <person name="Huckle E."/>
            <person name="Johnson C."/>
            <person name="Johnson D."/>
            <person name="Joy A.A."/>
            <person name="Kay M."/>
            <person name="Keenan S."/>
            <person name="Kershaw J.K."/>
            <person name="Kimberley A.M."/>
            <person name="King A."/>
            <person name="Knights A."/>
            <person name="Laird G.K."/>
            <person name="Langford C."/>
            <person name="Lawlor S."/>
            <person name="Leongamornlert D.A."/>
            <person name="Leversha M."/>
            <person name="Lloyd C."/>
            <person name="Lloyd D.M."/>
            <person name="Lovell J."/>
            <person name="Martin S."/>
            <person name="Mashreghi-Mohammadi M."/>
            <person name="Matthews L."/>
            <person name="McLaren S."/>
            <person name="McLay K.E."/>
            <person name="McMurray A."/>
            <person name="Milne S."/>
            <person name="Nickerson T."/>
            <person name="Nisbett J."/>
            <person name="Nordsiek G."/>
            <person name="Pearce A.V."/>
            <person name="Peck A.I."/>
            <person name="Porter K.M."/>
            <person name="Pandian R."/>
            <person name="Pelan S."/>
            <person name="Phillimore B."/>
            <person name="Povey S."/>
            <person name="Ramsey Y."/>
            <person name="Rand V."/>
            <person name="Scharfe M."/>
            <person name="Sehra H.K."/>
            <person name="Shownkeen R."/>
            <person name="Sims S.K."/>
            <person name="Skuce C.D."/>
            <person name="Smith M."/>
            <person name="Steward C.A."/>
            <person name="Swarbreck D."/>
            <person name="Sycamore N."/>
            <person name="Tester J."/>
            <person name="Thorpe A."/>
            <person name="Tracey A."/>
            <person name="Tromans A."/>
            <person name="Thomas D.W."/>
            <person name="Wall M."/>
            <person name="Wallis J.M."/>
            <person name="West A.P."/>
            <person name="Whitehead S.L."/>
            <person name="Willey D.L."/>
            <person name="Williams S.A."/>
            <person name="Wilming L."/>
            <person name="Wray P.W."/>
            <person name="Young L."/>
            <person name="Ashurst J.L."/>
            <person name="Coulson A."/>
            <person name="Blocker H."/>
            <person name="Durbin R.M."/>
            <person name="Sulston J.E."/>
            <person name="Hubbard T."/>
            <person name="Jackson M.J."/>
            <person name="Bentley D.R."/>
            <person name="Beck S."/>
            <person name="Rogers J."/>
            <person name="Dunham I."/>
        </authorList>
    </citation>
    <scope>NUCLEOTIDE SEQUENCE [LARGE SCALE GENOMIC DNA]</scope>
</reference>
<reference key="3">
    <citation type="journal article" date="2004" name="Genome Res.">
        <title>The status, quality, and expansion of the NIH full-length cDNA project: the Mammalian Gene Collection (MGC).</title>
        <authorList>
            <consortium name="The MGC Project Team"/>
        </authorList>
    </citation>
    <scope>NUCLEOTIDE SEQUENCE [LARGE SCALE MRNA] (ISOFORM 1)</scope>
    <scope>VARIANT PHE-127</scope>
    <source>
        <tissue>Skin</tissue>
    </source>
</reference>
<reference key="4">
    <citation type="journal article" date="2011" name="BMC Syst. Biol.">
        <title>Initial characterization of the human central proteome.</title>
        <authorList>
            <person name="Burkard T.R."/>
            <person name="Planyavsky M."/>
            <person name="Kaupe I."/>
            <person name="Breitwieser F.P."/>
            <person name="Buerckstuemmer T."/>
            <person name="Bennett K.L."/>
            <person name="Superti-Furga G."/>
            <person name="Colinge J."/>
        </authorList>
    </citation>
    <scope>IDENTIFICATION BY MASS SPECTROMETRY [LARGE SCALE ANALYSIS]</scope>
</reference>
<reference key="5">
    <citation type="journal article" date="2015" name="Proteomics">
        <title>N-terminome analysis of the human mitochondrial proteome.</title>
        <authorList>
            <person name="Vaca Jacome A.S."/>
            <person name="Rabilloud T."/>
            <person name="Schaeffer-Reiss C."/>
            <person name="Rompais M."/>
            <person name="Ayoub D."/>
            <person name="Lane L."/>
            <person name="Bairoch A."/>
            <person name="Van Dorsselaer A."/>
            <person name="Carapito C."/>
        </authorList>
    </citation>
    <scope>IDENTIFICATION BY MASS SPECTROMETRY [LARGE SCALE ANALYSIS]</scope>
</reference>
<reference evidence="9" key="6">
    <citation type="journal article" date="2014" name="Science">
        <title>Structure of the large ribosomal subunit from human mitochondria.</title>
        <authorList>
            <person name="Brown A."/>
            <person name="Amunts A."/>
            <person name="Bai X.C."/>
            <person name="Sugimoto Y."/>
            <person name="Edwards P.C."/>
            <person name="Murshudov G."/>
            <person name="Scheres S.H."/>
            <person name="Ramakrishnan V."/>
        </authorList>
    </citation>
    <scope>STRUCTURE BY ELECTRON MICROSCOPY (3.40 ANGSTROMS)</scope>
    <scope>SUBCELLULAR LOCATION</scope>
    <scope>SUBUNIT</scope>
</reference>
<reference evidence="10" key="7">
    <citation type="journal article" date="2015" name="Science">
        <title>Ribosome. The structure of the human mitochondrial ribosome.</title>
        <authorList>
            <person name="Amunts A."/>
            <person name="Brown A."/>
            <person name="Toots J."/>
            <person name="Scheres S.H."/>
            <person name="Ramakrishnan V."/>
        </authorList>
    </citation>
    <scope>STRUCTURE BY ELECTRON MICROSCOPY (3.50 ANGSTROMS)</scope>
    <scope>SUBCELLULAR LOCATION</scope>
    <scope>SUBUNIT</scope>
</reference>
<reference evidence="11 12" key="8">
    <citation type="journal article" date="2017" name="Nat. Struct. Mol. Biol.">
        <title>Structures of the human mitochondrial ribosome in native states of assembly.</title>
        <authorList>
            <person name="Brown A."/>
            <person name="Rathore S."/>
            <person name="Kimanius D."/>
            <person name="Aibara S."/>
            <person name="Bai X.C."/>
            <person name="Rorbach J."/>
            <person name="Amunts A."/>
            <person name="Ramakrishnan V."/>
        </authorList>
    </citation>
    <scope>STRUCTURE BY ELECTRON MICROSCOPY (3.03 ANGSTROMS)</scope>
    <scope>SUBCELLULAR LOCATION</scope>
    <scope>SUBUNIT</scope>
</reference>
<reference evidence="13 14" key="9">
    <citation type="journal article" date="2022" name="Nat. Commun.">
        <title>A late-stage assembly checkpoint of the human mitochondrial ribosome large subunit.</title>
        <authorList>
            <person name="Rebelo-Guiomar P."/>
            <person name="Pellegrino S."/>
            <person name="Dent K.C."/>
            <person name="Sas-Chen A."/>
            <person name="Miller-Fleming L."/>
            <person name="Garone C."/>
            <person name="Van Haute L."/>
            <person name="Rogan J.F."/>
            <person name="Dinan A."/>
            <person name="Firth A.E."/>
            <person name="Andrews B."/>
            <person name="Whitworth A.J."/>
            <person name="Schwartz S."/>
            <person name="Warren A.J."/>
            <person name="Minczuk M."/>
        </authorList>
    </citation>
    <scope>STRUCTURE BY ELECTRON MICROSCOPY (2.9 ANGSTROMS) IN COMPLEX WITH MTLSU</scope>
    <scope>SUBUNIT</scope>
</reference>
<protein>
    <recommendedName>
        <fullName evidence="7">Large ribosomal subunit protein mL50</fullName>
    </recommendedName>
    <alternativeName>
        <fullName>39S ribosomal protein L50, mitochondrial</fullName>
        <shortName>L50mt</shortName>
        <shortName>MRP-L50</shortName>
    </alternativeName>
</protein>
<gene>
    <name type="primary">MRPL50</name>
</gene>
<feature type="chain" id="PRO_0000261659" description="Large ribosomal subunit protein mL50">
    <location>
        <begin position="1"/>
        <end position="158"/>
    </location>
</feature>
<feature type="splice variant" id="VSP_056091" description="In isoform 2." evidence="6">
    <original>VRDVLDFYNVPIQDRSKFDELSASNLPPNLKITWSY</original>
    <variation>GYSFEEGKIQLGI</variation>
    <location>
        <begin position="123"/>
        <end position="158"/>
    </location>
</feature>
<feature type="sequence variant" id="VAR_029474" description="In dbSNP:rs8131." evidence="1">
    <original>L</original>
    <variation>F</variation>
    <location>
        <position position="127"/>
    </location>
</feature>
<feature type="helix" evidence="15">
    <location>
        <begin position="66"/>
        <end position="77"/>
    </location>
</feature>
<feature type="helix" evidence="15">
    <location>
        <begin position="86"/>
        <end position="88"/>
    </location>
</feature>
<feature type="helix" evidence="15">
    <location>
        <begin position="94"/>
        <end position="108"/>
    </location>
</feature>
<feature type="helix" evidence="15">
    <location>
        <begin position="114"/>
        <end position="117"/>
    </location>
</feature>
<feature type="helix" evidence="15">
    <location>
        <begin position="123"/>
        <end position="130"/>
    </location>
</feature>
<feature type="helix" evidence="15">
    <location>
        <begin position="139"/>
        <end position="144"/>
    </location>
</feature>
<feature type="turn" evidence="15">
    <location>
        <begin position="145"/>
        <end position="147"/>
    </location>
</feature>
<feature type="strand" evidence="15">
    <location>
        <begin position="152"/>
        <end position="154"/>
    </location>
</feature>
<dbReference type="EMBL" id="AK000500">
    <property type="protein sequence ID" value="BAA91207.1"/>
    <property type="molecule type" value="mRNA"/>
</dbReference>
<dbReference type="EMBL" id="AK025643">
    <property type="protein sequence ID" value="BAB15200.1"/>
    <property type="molecule type" value="mRNA"/>
</dbReference>
<dbReference type="EMBL" id="AK295521">
    <property type="protein sequence ID" value="BAH12094.1"/>
    <property type="molecule type" value="mRNA"/>
</dbReference>
<dbReference type="EMBL" id="AL353621">
    <property type="status" value="NOT_ANNOTATED_CDS"/>
    <property type="molecule type" value="Genomic_DNA"/>
</dbReference>
<dbReference type="EMBL" id="BC032008">
    <property type="protein sequence ID" value="AAH32008.1"/>
    <property type="molecule type" value="mRNA"/>
</dbReference>
<dbReference type="CCDS" id="CCDS6753.1">
    <molecule id="Q8N5N7-1"/>
</dbReference>
<dbReference type="RefSeq" id="NP_061924.1">
    <molecule id="Q8N5N7-1"/>
    <property type="nucleotide sequence ID" value="NM_019051.3"/>
</dbReference>
<dbReference type="PDB" id="3J7Y">
    <property type="method" value="EM"/>
    <property type="resolution" value="3.40 A"/>
    <property type="chains" value="h=1-158"/>
</dbReference>
<dbReference type="PDB" id="3J9M">
    <property type="method" value="EM"/>
    <property type="resolution" value="3.50 A"/>
    <property type="chains" value="h=1-158"/>
</dbReference>
<dbReference type="PDB" id="5OOL">
    <property type="method" value="EM"/>
    <property type="resolution" value="3.06 A"/>
    <property type="chains" value="h=1-158"/>
</dbReference>
<dbReference type="PDB" id="5OOM">
    <property type="method" value="EM"/>
    <property type="resolution" value="3.03 A"/>
    <property type="chains" value="h=1-158"/>
</dbReference>
<dbReference type="PDB" id="6I9R">
    <property type="method" value="EM"/>
    <property type="resolution" value="3.90 A"/>
    <property type="chains" value="h=1-158"/>
</dbReference>
<dbReference type="PDB" id="6NU2">
    <property type="method" value="EM"/>
    <property type="resolution" value="3.90 A"/>
    <property type="chains" value="h=56-158"/>
</dbReference>
<dbReference type="PDB" id="6NU3">
    <property type="method" value="EM"/>
    <property type="resolution" value="4.40 A"/>
    <property type="chains" value="h=1-158"/>
</dbReference>
<dbReference type="PDB" id="6VLZ">
    <property type="method" value="EM"/>
    <property type="resolution" value="2.97 A"/>
    <property type="chains" value="h=1-158"/>
</dbReference>
<dbReference type="PDB" id="6VMI">
    <property type="method" value="EM"/>
    <property type="resolution" value="2.96 A"/>
    <property type="chains" value="h=1-158"/>
</dbReference>
<dbReference type="PDB" id="6ZM5">
    <property type="method" value="EM"/>
    <property type="resolution" value="2.89 A"/>
    <property type="chains" value="h=1-158"/>
</dbReference>
<dbReference type="PDB" id="6ZM6">
    <property type="method" value="EM"/>
    <property type="resolution" value="2.59 A"/>
    <property type="chains" value="h=1-158"/>
</dbReference>
<dbReference type="PDB" id="6ZS9">
    <property type="method" value="EM"/>
    <property type="resolution" value="4.00 A"/>
    <property type="chains" value="h=1-158"/>
</dbReference>
<dbReference type="PDB" id="6ZSA">
    <property type="method" value="EM"/>
    <property type="resolution" value="4.00 A"/>
    <property type="chains" value="h=1-158"/>
</dbReference>
<dbReference type="PDB" id="6ZSB">
    <property type="method" value="EM"/>
    <property type="resolution" value="4.50 A"/>
    <property type="chains" value="h=1-158"/>
</dbReference>
<dbReference type="PDB" id="6ZSC">
    <property type="method" value="EM"/>
    <property type="resolution" value="3.50 A"/>
    <property type="chains" value="h=1-158"/>
</dbReference>
<dbReference type="PDB" id="6ZSD">
    <property type="method" value="EM"/>
    <property type="resolution" value="3.70 A"/>
    <property type="chains" value="h=1-158"/>
</dbReference>
<dbReference type="PDB" id="6ZSE">
    <property type="method" value="EM"/>
    <property type="resolution" value="5.00 A"/>
    <property type="chains" value="h=1-158"/>
</dbReference>
<dbReference type="PDB" id="6ZSG">
    <property type="method" value="EM"/>
    <property type="resolution" value="4.00 A"/>
    <property type="chains" value="h=1-158"/>
</dbReference>
<dbReference type="PDB" id="7A5F">
    <property type="method" value="EM"/>
    <property type="resolution" value="4.40 A"/>
    <property type="chains" value="h3=1-158"/>
</dbReference>
<dbReference type="PDB" id="7A5G">
    <property type="method" value="EM"/>
    <property type="resolution" value="4.33 A"/>
    <property type="chains" value="h3=1-158"/>
</dbReference>
<dbReference type="PDB" id="7A5H">
    <property type="method" value="EM"/>
    <property type="resolution" value="3.30 A"/>
    <property type="chains" value="h=1-158"/>
</dbReference>
<dbReference type="PDB" id="7A5I">
    <property type="method" value="EM"/>
    <property type="resolution" value="3.70 A"/>
    <property type="chains" value="h3=1-158"/>
</dbReference>
<dbReference type="PDB" id="7A5J">
    <property type="method" value="EM"/>
    <property type="resolution" value="3.10 A"/>
    <property type="chains" value="h=1-158"/>
</dbReference>
<dbReference type="PDB" id="7A5K">
    <property type="method" value="EM"/>
    <property type="resolution" value="3.70 A"/>
    <property type="chains" value="h3=1-158"/>
</dbReference>
<dbReference type="PDB" id="7L08">
    <property type="method" value="EM"/>
    <property type="resolution" value="3.49 A"/>
    <property type="chains" value="h=1-158"/>
</dbReference>
<dbReference type="PDB" id="7L20">
    <property type="method" value="EM"/>
    <property type="resolution" value="3.15 A"/>
    <property type="chains" value="h=1-158"/>
</dbReference>
<dbReference type="PDB" id="7O9K">
    <property type="method" value="EM"/>
    <property type="resolution" value="3.10 A"/>
    <property type="chains" value="h=1-158"/>
</dbReference>
<dbReference type="PDB" id="7O9M">
    <property type="method" value="EM"/>
    <property type="resolution" value="2.50 A"/>
    <property type="chains" value="h=1-158"/>
</dbReference>
<dbReference type="PDB" id="7ODR">
    <property type="method" value="EM"/>
    <property type="resolution" value="2.90 A"/>
    <property type="chains" value="h=1-158"/>
</dbReference>
<dbReference type="PDB" id="7ODS">
    <property type="method" value="EM"/>
    <property type="resolution" value="3.10 A"/>
    <property type="chains" value="h=1-158"/>
</dbReference>
<dbReference type="PDB" id="7ODT">
    <property type="method" value="EM"/>
    <property type="resolution" value="3.10 A"/>
    <property type="chains" value="h=1-158"/>
</dbReference>
<dbReference type="PDB" id="7OF0">
    <property type="method" value="EM"/>
    <property type="resolution" value="2.20 A"/>
    <property type="chains" value="h=1-158"/>
</dbReference>
<dbReference type="PDB" id="7OF2">
    <property type="method" value="EM"/>
    <property type="resolution" value="2.70 A"/>
    <property type="chains" value="h=1-158"/>
</dbReference>
<dbReference type="PDB" id="7OF3">
    <property type="method" value="EM"/>
    <property type="resolution" value="2.70 A"/>
    <property type="chains" value="h=1-158"/>
</dbReference>
<dbReference type="PDB" id="7OF4">
    <property type="method" value="EM"/>
    <property type="resolution" value="2.70 A"/>
    <property type="chains" value="h=1-158"/>
</dbReference>
<dbReference type="PDB" id="7OF5">
    <property type="method" value="EM"/>
    <property type="resolution" value="2.90 A"/>
    <property type="chains" value="h=1-158"/>
</dbReference>
<dbReference type="PDB" id="7OF6">
    <property type="method" value="EM"/>
    <property type="resolution" value="2.60 A"/>
    <property type="chains" value="h=1-158"/>
</dbReference>
<dbReference type="PDB" id="7OF7">
    <property type="method" value="EM"/>
    <property type="resolution" value="2.50 A"/>
    <property type="chains" value="h=1-158"/>
</dbReference>
<dbReference type="PDB" id="7OG4">
    <property type="method" value="EM"/>
    <property type="resolution" value="3.80 A"/>
    <property type="chains" value="h=1-158"/>
</dbReference>
<dbReference type="PDB" id="7OI6">
    <property type="method" value="EM"/>
    <property type="resolution" value="5.70 A"/>
    <property type="chains" value="h=1-158"/>
</dbReference>
<dbReference type="PDB" id="7OI7">
    <property type="method" value="EM"/>
    <property type="resolution" value="3.50 A"/>
    <property type="chains" value="h=1-158"/>
</dbReference>
<dbReference type="PDB" id="7OI8">
    <property type="method" value="EM"/>
    <property type="resolution" value="3.50 A"/>
    <property type="chains" value="h=1-158"/>
</dbReference>
<dbReference type="PDB" id="7OI9">
    <property type="method" value="EM"/>
    <property type="resolution" value="3.30 A"/>
    <property type="chains" value="h=1-158"/>
</dbReference>
<dbReference type="PDB" id="7OIA">
    <property type="method" value="EM"/>
    <property type="resolution" value="3.20 A"/>
    <property type="chains" value="h=1-158"/>
</dbReference>
<dbReference type="PDB" id="7OIB">
    <property type="method" value="EM"/>
    <property type="resolution" value="3.30 A"/>
    <property type="chains" value="h=1-158"/>
</dbReference>
<dbReference type="PDB" id="7OIC">
    <property type="method" value="EM"/>
    <property type="resolution" value="3.10 A"/>
    <property type="chains" value="h=1-158"/>
</dbReference>
<dbReference type="PDB" id="7OID">
    <property type="method" value="EM"/>
    <property type="resolution" value="3.70 A"/>
    <property type="chains" value="h=1-158"/>
</dbReference>
<dbReference type="PDB" id="7OIE">
    <property type="method" value="EM"/>
    <property type="resolution" value="3.50 A"/>
    <property type="chains" value="h=1-158"/>
</dbReference>
<dbReference type="PDB" id="7PD3">
    <property type="method" value="EM"/>
    <property type="resolution" value="3.40 A"/>
    <property type="chains" value="h=1-158"/>
</dbReference>
<dbReference type="PDB" id="7PO4">
    <property type="method" value="EM"/>
    <property type="resolution" value="2.56 A"/>
    <property type="chains" value="h=1-158"/>
</dbReference>
<dbReference type="PDB" id="7QH6">
    <property type="method" value="EM"/>
    <property type="resolution" value="3.08 A"/>
    <property type="chains" value="h=1-158"/>
</dbReference>
<dbReference type="PDB" id="7QH7">
    <property type="method" value="EM"/>
    <property type="resolution" value="2.89 A"/>
    <property type="chains" value="h=53-157"/>
</dbReference>
<dbReference type="PDB" id="7QI4">
    <property type="method" value="EM"/>
    <property type="resolution" value="2.21 A"/>
    <property type="chains" value="h=1-158"/>
</dbReference>
<dbReference type="PDB" id="7QI5">
    <property type="method" value="EM"/>
    <property type="resolution" value="2.63 A"/>
    <property type="chains" value="h=1-158"/>
</dbReference>
<dbReference type="PDB" id="7QI6">
    <property type="method" value="EM"/>
    <property type="resolution" value="2.98 A"/>
    <property type="chains" value="h=1-158"/>
</dbReference>
<dbReference type="PDB" id="8ANY">
    <property type="method" value="EM"/>
    <property type="resolution" value="2.85 A"/>
    <property type="chains" value="h=1-158"/>
</dbReference>
<dbReference type="PDB" id="8K2A">
    <property type="method" value="EM"/>
    <property type="resolution" value="2.90 A"/>
    <property type="chains" value="Lx=1-158"/>
</dbReference>
<dbReference type="PDB" id="8K2B">
    <property type="method" value="EM"/>
    <property type="resolution" value="3.40 A"/>
    <property type="chains" value="Lx=1-158"/>
</dbReference>
<dbReference type="PDB" id="8OIR">
    <property type="method" value="EM"/>
    <property type="resolution" value="3.10 A"/>
    <property type="chains" value="By=1-158"/>
</dbReference>
<dbReference type="PDB" id="8OIT">
    <property type="method" value="EM"/>
    <property type="resolution" value="2.90 A"/>
    <property type="chains" value="By=1-158"/>
</dbReference>
<dbReference type="PDB" id="8PK0">
    <property type="method" value="EM"/>
    <property type="resolution" value="3.03 A"/>
    <property type="chains" value="h=1-158"/>
</dbReference>
<dbReference type="PDB" id="8QSJ">
    <property type="method" value="EM"/>
    <property type="resolution" value="3.00 A"/>
    <property type="chains" value="h=1-158"/>
</dbReference>
<dbReference type="PDB" id="8QU5">
    <property type="method" value="EM"/>
    <property type="resolution" value="2.42 A"/>
    <property type="chains" value="h=1-158"/>
</dbReference>
<dbReference type="PDB" id="8RRI">
    <property type="method" value="EM"/>
    <property type="resolution" value="2.40 A"/>
    <property type="chains" value="h=1-158"/>
</dbReference>
<dbReference type="PDB" id="8XT0">
    <property type="method" value="EM"/>
    <property type="resolution" value="3.20 A"/>
    <property type="chains" value="Lx=1-158"/>
</dbReference>
<dbReference type="PDB" id="8XT1">
    <property type="method" value="EM"/>
    <property type="resolution" value="3.10 A"/>
    <property type="chains" value="Lx=1-158"/>
</dbReference>
<dbReference type="PDB" id="8XT2">
    <property type="method" value="EM"/>
    <property type="resolution" value="3.30 A"/>
    <property type="chains" value="Lx=1-158"/>
</dbReference>
<dbReference type="PDB" id="8XT3">
    <property type="method" value="EM"/>
    <property type="resolution" value="3.10 A"/>
    <property type="chains" value="Lx=1-158"/>
</dbReference>
<dbReference type="PDBsum" id="3J7Y"/>
<dbReference type="PDBsum" id="3J9M"/>
<dbReference type="PDBsum" id="5OOL"/>
<dbReference type="PDBsum" id="5OOM"/>
<dbReference type="PDBsum" id="6I9R"/>
<dbReference type="PDBsum" id="6NU2"/>
<dbReference type="PDBsum" id="6NU3"/>
<dbReference type="PDBsum" id="6VLZ"/>
<dbReference type="PDBsum" id="6VMI"/>
<dbReference type="PDBsum" id="6ZM5"/>
<dbReference type="PDBsum" id="6ZM6"/>
<dbReference type="PDBsum" id="6ZS9"/>
<dbReference type="PDBsum" id="6ZSA"/>
<dbReference type="PDBsum" id="6ZSB"/>
<dbReference type="PDBsum" id="6ZSC"/>
<dbReference type="PDBsum" id="6ZSD"/>
<dbReference type="PDBsum" id="6ZSE"/>
<dbReference type="PDBsum" id="6ZSG"/>
<dbReference type="PDBsum" id="7A5F"/>
<dbReference type="PDBsum" id="7A5G"/>
<dbReference type="PDBsum" id="7A5H"/>
<dbReference type="PDBsum" id="7A5I"/>
<dbReference type="PDBsum" id="7A5J"/>
<dbReference type="PDBsum" id="7A5K"/>
<dbReference type="PDBsum" id="7L08"/>
<dbReference type="PDBsum" id="7L20"/>
<dbReference type="PDBsum" id="7O9K"/>
<dbReference type="PDBsum" id="7O9M"/>
<dbReference type="PDBsum" id="7ODR"/>
<dbReference type="PDBsum" id="7ODS"/>
<dbReference type="PDBsum" id="7ODT"/>
<dbReference type="PDBsum" id="7OF0"/>
<dbReference type="PDBsum" id="7OF2"/>
<dbReference type="PDBsum" id="7OF3"/>
<dbReference type="PDBsum" id="7OF4"/>
<dbReference type="PDBsum" id="7OF5"/>
<dbReference type="PDBsum" id="7OF6"/>
<dbReference type="PDBsum" id="7OF7"/>
<dbReference type="PDBsum" id="7OG4"/>
<dbReference type="PDBsum" id="7OI6"/>
<dbReference type="PDBsum" id="7OI7"/>
<dbReference type="PDBsum" id="7OI8"/>
<dbReference type="PDBsum" id="7OI9"/>
<dbReference type="PDBsum" id="7OIA"/>
<dbReference type="PDBsum" id="7OIB"/>
<dbReference type="PDBsum" id="7OIC"/>
<dbReference type="PDBsum" id="7OID"/>
<dbReference type="PDBsum" id="7OIE"/>
<dbReference type="PDBsum" id="7PD3"/>
<dbReference type="PDBsum" id="7PO4"/>
<dbReference type="PDBsum" id="7QH6"/>
<dbReference type="PDBsum" id="7QH7"/>
<dbReference type="PDBsum" id="7QI4"/>
<dbReference type="PDBsum" id="7QI5"/>
<dbReference type="PDBsum" id="7QI6"/>
<dbReference type="PDBsum" id="8ANY"/>
<dbReference type="PDBsum" id="8K2A"/>
<dbReference type="PDBsum" id="8K2B"/>
<dbReference type="PDBsum" id="8OIR"/>
<dbReference type="PDBsum" id="8OIT"/>
<dbReference type="PDBsum" id="8PK0"/>
<dbReference type="PDBsum" id="8QSJ"/>
<dbReference type="PDBsum" id="8QU5"/>
<dbReference type="PDBsum" id="8RRI"/>
<dbReference type="PDBsum" id="8XT0"/>
<dbReference type="PDBsum" id="8XT1"/>
<dbReference type="PDBsum" id="8XT2"/>
<dbReference type="PDBsum" id="8XT3"/>
<dbReference type="EMDB" id="EMD-0514"/>
<dbReference type="EMDB" id="EMD-0515"/>
<dbReference type="EMDB" id="EMD-11278"/>
<dbReference type="EMDB" id="EMD-11279"/>
<dbReference type="EMDB" id="EMD-11390"/>
<dbReference type="EMDB" id="EMD-11391"/>
<dbReference type="EMDB" id="EMD-11392"/>
<dbReference type="EMDB" id="EMD-11393"/>
<dbReference type="EMDB" id="EMD-11394"/>
<dbReference type="EMDB" id="EMD-11395"/>
<dbReference type="EMDB" id="EMD-11397"/>
<dbReference type="EMDB" id="EMD-11641"/>
<dbReference type="EMDB" id="EMD-11642"/>
<dbReference type="EMDB" id="EMD-11643"/>
<dbReference type="EMDB" id="EMD-11644"/>
<dbReference type="EMDB" id="EMD-11645"/>
<dbReference type="EMDB" id="EMD-11646"/>
<dbReference type="EMDB" id="EMD-12763"/>
<dbReference type="EMDB" id="EMD-12764"/>
<dbReference type="EMDB" id="EMD-12845"/>
<dbReference type="EMDB" id="EMD-12846"/>
<dbReference type="EMDB" id="EMD-12847"/>
<dbReference type="EMDB" id="EMD-12865"/>
<dbReference type="EMDB" id="EMD-12867"/>
<dbReference type="EMDB" id="EMD-12868"/>
<dbReference type="EMDB" id="EMD-12869"/>
<dbReference type="EMDB" id="EMD-12870"/>
<dbReference type="EMDB" id="EMD-12871"/>
<dbReference type="EMDB" id="EMD-12872"/>
<dbReference type="EMDB" id="EMD-12877"/>
<dbReference type="EMDB" id="EMD-12919"/>
<dbReference type="EMDB" id="EMD-12920"/>
<dbReference type="EMDB" id="EMD-12921"/>
<dbReference type="EMDB" id="EMD-12922"/>
<dbReference type="EMDB" id="EMD-12923"/>
<dbReference type="EMDB" id="EMD-12924"/>
<dbReference type="EMDB" id="EMD-12925"/>
<dbReference type="EMDB" id="EMD-12926"/>
<dbReference type="EMDB" id="EMD-12927"/>
<dbReference type="EMDB" id="EMD-13329"/>
<dbReference type="EMDB" id="EMD-13562"/>
<dbReference type="EMDB" id="EMD-13965"/>
<dbReference type="EMDB" id="EMD-13967"/>
<dbReference type="EMDB" id="EMD-13980"/>
<dbReference type="EMDB" id="EMD-13981"/>
<dbReference type="EMDB" id="EMD-13982"/>
<dbReference type="EMDB" id="EMD-15544"/>
<dbReference type="EMDB" id="EMD-16897"/>
<dbReference type="EMDB" id="EMD-16899"/>
<dbReference type="EMDB" id="EMD-17719"/>
<dbReference type="EMDB" id="EMD-19460"/>
<dbReference type="EMDB" id="EMD-21233"/>
<dbReference type="EMDB" id="EMD-21242"/>
<dbReference type="EMDB" id="EMD-23096"/>
<dbReference type="EMDB" id="EMD-23121"/>
<dbReference type="EMDB" id="EMD-36836"/>
<dbReference type="EMDB" id="EMD-36837"/>
<dbReference type="EMDB" id="EMD-3842"/>
<dbReference type="EMDB" id="EMD-3843"/>
<dbReference type="EMDB" id="EMD-38632"/>
<dbReference type="EMDB" id="EMD-38633"/>
<dbReference type="EMDB" id="EMD-38634"/>
<dbReference type="EMDB" id="EMD-38635"/>
<dbReference type="EMDB" id="EMD-4434"/>
<dbReference type="SMR" id="Q8N5N7"/>
<dbReference type="BioGRID" id="120021">
    <property type="interactions" value="242"/>
</dbReference>
<dbReference type="ComplexPortal" id="CPX-5226">
    <property type="entry name" value="39S mitochondrial large ribosomal subunit"/>
</dbReference>
<dbReference type="CORUM" id="Q8N5N7"/>
<dbReference type="FunCoup" id="Q8N5N7">
    <property type="interactions" value="847"/>
</dbReference>
<dbReference type="IntAct" id="Q8N5N7">
    <property type="interactions" value="142"/>
</dbReference>
<dbReference type="MINT" id="Q8N5N7"/>
<dbReference type="STRING" id="9606.ENSP00000363999"/>
<dbReference type="GlyGen" id="Q8N5N7">
    <property type="glycosylation" value="1 site, 1 O-linked glycan (1 site)"/>
</dbReference>
<dbReference type="iPTMnet" id="Q8N5N7"/>
<dbReference type="PhosphoSitePlus" id="Q8N5N7"/>
<dbReference type="SwissPalm" id="Q8N5N7"/>
<dbReference type="BioMuta" id="MRPL50"/>
<dbReference type="DMDM" id="118573685"/>
<dbReference type="jPOST" id="Q8N5N7"/>
<dbReference type="MassIVE" id="Q8N5N7"/>
<dbReference type="PaxDb" id="9606-ENSP00000363999"/>
<dbReference type="PeptideAtlas" id="Q8N5N7"/>
<dbReference type="ProteomicsDB" id="6492"/>
<dbReference type="ProteomicsDB" id="72078">
    <molecule id="Q8N5N7-1"/>
</dbReference>
<dbReference type="Pumba" id="Q8N5N7"/>
<dbReference type="TopDownProteomics" id="Q8N5N7-1">
    <molecule id="Q8N5N7-1"/>
</dbReference>
<dbReference type="Antibodypedia" id="14646">
    <property type="antibodies" value="134 antibodies from 24 providers"/>
</dbReference>
<dbReference type="DNASU" id="54534"/>
<dbReference type="Ensembl" id="ENST00000374865.5">
    <molecule id="Q8N5N7-1"/>
    <property type="protein sequence ID" value="ENSP00000363999.4"/>
    <property type="gene ID" value="ENSG00000136897.8"/>
</dbReference>
<dbReference type="GeneID" id="54534"/>
<dbReference type="KEGG" id="hsa:54534"/>
<dbReference type="MANE-Select" id="ENST00000374865.5">
    <property type="protein sequence ID" value="ENSP00000363999.4"/>
    <property type="RefSeq nucleotide sequence ID" value="NM_019051.3"/>
    <property type="RefSeq protein sequence ID" value="NP_061924.1"/>
</dbReference>
<dbReference type="UCSC" id="uc004bbe.3">
    <molecule id="Q8N5N7-1"/>
    <property type="organism name" value="human"/>
</dbReference>
<dbReference type="AGR" id="HGNC:16654"/>
<dbReference type="CTD" id="54534"/>
<dbReference type="GeneCards" id="MRPL50"/>
<dbReference type="HGNC" id="HGNC:16654">
    <property type="gene designation" value="MRPL50"/>
</dbReference>
<dbReference type="HPA" id="ENSG00000136897">
    <property type="expression patterns" value="Low tissue specificity"/>
</dbReference>
<dbReference type="MIM" id="611854">
    <property type="type" value="gene"/>
</dbReference>
<dbReference type="neXtProt" id="NX_Q8N5N7"/>
<dbReference type="OpenTargets" id="ENSG00000136897"/>
<dbReference type="PharmGKB" id="PA30983"/>
<dbReference type="VEuPathDB" id="HostDB:ENSG00000136897"/>
<dbReference type="eggNOG" id="ENOG502S27V">
    <property type="taxonomic scope" value="Eukaryota"/>
</dbReference>
<dbReference type="GeneTree" id="ENSGT00390000004279"/>
<dbReference type="HOGENOM" id="CLU_137129_0_0_1"/>
<dbReference type="InParanoid" id="Q8N5N7"/>
<dbReference type="OMA" id="LMCSAQD"/>
<dbReference type="OrthoDB" id="9939609at2759"/>
<dbReference type="PAN-GO" id="Q8N5N7">
    <property type="GO annotations" value="1 GO annotation based on evolutionary models"/>
</dbReference>
<dbReference type="PhylomeDB" id="Q8N5N7"/>
<dbReference type="TreeFam" id="TF105895"/>
<dbReference type="PathwayCommons" id="Q8N5N7"/>
<dbReference type="Reactome" id="R-HSA-5368286">
    <property type="pathway name" value="Mitochondrial translation initiation"/>
</dbReference>
<dbReference type="Reactome" id="R-HSA-5389840">
    <property type="pathway name" value="Mitochondrial translation elongation"/>
</dbReference>
<dbReference type="Reactome" id="R-HSA-5419276">
    <property type="pathway name" value="Mitochondrial translation termination"/>
</dbReference>
<dbReference type="SignaLink" id="Q8N5N7"/>
<dbReference type="SIGNOR" id="Q8N5N7"/>
<dbReference type="BioGRID-ORCS" id="54534">
    <property type="hits" value="293 hits in 1155 CRISPR screens"/>
</dbReference>
<dbReference type="ChiTaRS" id="MRPL50">
    <property type="organism name" value="human"/>
</dbReference>
<dbReference type="EvolutionaryTrace" id="Q8N5N7"/>
<dbReference type="GenomeRNAi" id="54534"/>
<dbReference type="Pharos" id="Q8N5N7">
    <property type="development level" value="Tdark"/>
</dbReference>
<dbReference type="PRO" id="PR:Q8N5N7"/>
<dbReference type="Proteomes" id="UP000005640">
    <property type="component" value="Chromosome 9"/>
</dbReference>
<dbReference type="RNAct" id="Q8N5N7">
    <property type="molecule type" value="protein"/>
</dbReference>
<dbReference type="Bgee" id="ENSG00000136897">
    <property type="expression patterns" value="Expressed in left ventricle myocardium and 196 other cell types or tissues"/>
</dbReference>
<dbReference type="GO" id="GO:0005829">
    <property type="term" value="C:cytosol"/>
    <property type="evidence" value="ECO:0000314"/>
    <property type="project" value="HPA"/>
</dbReference>
<dbReference type="GO" id="GO:0005743">
    <property type="term" value="C:mitochondrial inner membrane"/>
    <property type="evidence" value="ECO:0000304"/>
    <property type="project" value="Reactome"/>
</dbReference>
<dbReference type="GO" id="GO:0005762">
    <property type="term" value="C:mitochondrial large ribosomal subunit"/>
    <property type="evidence" value="ECO:0000314"/>
    <property type="project" value="UniProtKB"/>
</dbReference>
<dbReference type="GO" id="GO:0005739">
    <property type="term" value="C:mitochondrion"/>
    <property type="evidence" value="ECO:0000314"/>
    <property type="project" value="HPA"/>
</dbReference>
<dbReference type="GO" id="GO:0032543">
    <property type="term" value="P:mitochondrial translation"/>
    <property type="evidence" value="ECO:0000303"/>
    <property type="project" value="ComplexPortal"/>
</dbReference>
<dbReference type="InterPro" id="IPR018305">
    <property type="entry name" value="Ribosomal_m50"/>
</dbReference>
<dbReference type="PANTHER" id="PTHR31542">
    <property type="entry name" value="39A RIBOSOMAL PROTEIN L50, MITOCHONDRIAL"/>
    <property type="match status" value="1"/>
</dbReference>
<dbReference type="PANTHER" id="PTHR31542:SF1">
    <property type="entry name" value="LARGE RIBOSOMAL SUBUNIT PROTEIN ML50"/>
    <property type="match status" value="1"/>
</dbReference>
<dbReference type="Pfam" id="PF10501">
    <property type="entry name" value="Ribosomal_L50"/>
    <property type="match status" value="1"/>
</dbReference>
<name>RM50_HUMAN</name>
<comment type="subunit">
    <text evidence="2 3 4 5">Component of the mitochondrial large ribosomal subunit (mt-LSU) (PubMed:25278503, PubMed:25838379, PubMed:28892042, PubMed:35177605). Mature mammalian 55S mitochondrial ribosomes consist of a small (28S) and a large (39S) subunit. The 28S small subunit contains a 12S ribosomal RNA (12S mt-rRNA) and 30 different proteins. The 39S large subunit contains a 16S rRNA (16S mt-rRNA), a copy of mitochondrial valine transfer RNA (mt-tRNA(Val)), which plays an integral structural role, and 52 different proteins.</text>
</comment>
<comment type="subcellular location">
    <subcellularLocation>
        <location evidence="2 3 4">Mitochondrion</location>
    </subcellularLocation>
</comment>
<comment type="alternative products">
    <event type="alternative splicing"/>
    <isoform>
        <id>Q8N5N7-1</id>
        <name>1</name>
        <sequence type="displayed"/>
    </isoform>
    <isoform>
        <id>Q8N5N7-2</id>
        <name>2</name>
        <sequence type="described" ref="VSP_056091"/>
    </isoform>
</comment>
<comment type="similarity">
    <text evidence="8">Belongs to the mitochondrion-specific ribosomal protein mL50 family.</text>
</comment>
<proteinExistence type="evidence at protein level"/>
<organism>
    <name type="scientific">Homo sapiens</name>
    <name type="common">Human</name>
    <dbReference type="NCBI Taxonomy" id="9606"/>
    <lineage>
        <taxon>Eukaryota</taxon>
        <taxon>Metazoa</taxon>
        <taxon>Chordata</taxon>
        <taxon>Craniata</taxon>
        <taxon>Vertebrata</taxon>
        <taxon>Euteleostomi</taxon>
        <taxon>Mammalia</taxon>
        <taxon>Eutheria</taxon>
        <taxon>Euarchontoglires</taxon>
        <taxon>Primates</taxon>
        <taxon>Haplorrhini</taxon>
        <taxon>Catarrhini</taxon>
        <taxon>Hominidae</taxon>
        <taxon>Homo</taxon>
    </lineage>
</organism>
<sequence>MAARSVSGITRRVFMWTVSGTPCREFWSRFRKEKEPVVVETVEEKKEPILVCPPLRSRAYTPPEDLQSRLESYVKEVFGSSLPSNWQDISLEDSRLKFNLLAHLADDLGHVVPNSRLHQMCRVRDVLDFYNVPIQDRSKFDELSASNLPPNLKITWSY</sequence>
<accession>Q8N5N7</accession>
<accession>B7Z358</accession>
<accession>Q5T7E0</accession>
<accession>Q9NX15</accession>
<evidence type="ECO:0000269" key="1">
    <source>
    </source>
</evidence>
<evidence type="ECO:0000269" key="2">
    <source>
    </source>
</evidence>
<evidence type="ECO:0000269" key="3">
    <source>
    </source>
</evidence>
<evidence type="ECO:0000269" key="4">
    <source>
    </source>
</evidence>
<evidence type="ECO:0000269" key="5">
    <source>
    </source>
</evidence>
<evidence type="ECO:0000303" key="6">
    <source>
    </source>
</evidence>
<evidence type="ECO:0000303" key="7">
    <source>
    </source>
</evidence>
<evidence type="ECO:0000305" key="8"/>
<evidence type="ECO:0007744" key="9">
    <source>
        <dbReference type="PDB" id="3J7Y"/>
    </source>
</evidence>
<evidence type="ECO:0007744" key="10">
    <source>
        <dbReference type="PDB" id="3J9M"/>
    </source>
</evidence>
<evidence type="ECO:0007744" key="11">
    <source>
        <dbReference type="PDB" id="5OOL"/>
    </source>
</evidence>
<evidence type="ECO:0007744" key="12">
    <source>
        <dbReference type="PDB" id="5OOM"/>
    </source>
</evidence>
<evidence type="ECO:0007744" key="13">
    <source>
        <dbReference type="PDB" id="7QH6"/>
    </source>
</evidence>
<evidence type="ECO:0007744" key="14">
    <source>
        <dbReference type="PDB" id="7QH7"/>
    </source>
</evidence>
<evidence type="ECO:0007829" key="15">
    <source>
        <dbReference type="PDB" id="7OF0"/>
    </source>
</evidence>